<name>SYS_STRTD</name>
<sequence>MLDVKRIRNDFDALSEKLATRGVVAETLNELKELDVKRRELLIKSEELKAQRNIASDDIAQAKRNKEDASEQIAAMQKVSAEIKEIDAELAAIDEKLNTIIVTLPNIPNDSVPVGADEDENVEVRRWGTPRDFDFEVKAHWDLGEDLGILDWERGAKVTGSRFLFYKGLGARLERAIYNFMLDEHAKEGYTEMITPYMVNHDSMFGTGQYPKFKEDTFELDGTDYVLIPTAEVPLTNYYRGEILDGKELPIYFTALSPSFRSEAGSAGRDTRGLIRLHQFHKVEMVKFSKPEDSYDELEKMVVNAENILQKLNLPYRVITLCTGDMGFSAAKTYDLEVWIPAQNTYREISSCSNTEDFQARRAQIRYRDEADGKVKLLHTLNGSGLAVGRTVAAILENYQNEDGSVTIPEVLRPYMGGAEVILPK</sequence>
<organism>
    <name type="scientific">Streptococcus thermophilus (strain ATCC BAA-491 / LMD-9)</name>
    <dbReference type="NCBI Taxonomy" id="322159"/>
    <lineage>
        <taxon>Bacteria</taxon>
        <taxon>Bacillati</taxon>
        <taxon>Bacillota</taxon>
        <taxon>Bacilli</taxon>
        <taxon>Lactobacillales</taxon>
        <taxon>Streptococcaceae</taxon>
        <taxon>Streptococcus</taxon>
    </lineage>
</organism>
<accession>Q03MA3</accession>
<gene>
    <name evidence="1" type="primary">serS</name>
    <name type="ordered locus">STER_0368</name>
</gene>
<proteinExistence type="inferred from homology"/>
<evidence type="ECO:0000255" key="1">
    <source>
        <dbReference type="HAMAP-Rule" id="MF_00176"/>
    </source>
</evidence>
<reference key="1">
    <citation type="journal article" date="2006" name="Proc. Natl. Acad. Sci. U.S.A.">
        <title>Comparative genomics of the lactic acid bacteria.</title>
        <authorList>
            <person name="Makarova K.S."/>
            <person name="Slesarev A."/>
            <person name="Wolf Y.I."/>
            <person name="Sorokin A."/>
            <person name="Mirkin B."/>
            <person name="Koonin E.V."/>
            <person name="Pavlov A."/>
            <person name="Pavlova N."/>
            <person name="Karamychev V."/>
            <person name="Polouchine N."/>
            <person name="Shakhova V."/>
            <person name="Grigoriev I."/>
            <person name="Lou Y."/>
            <person name="Rohksar D."/>
            <person name="Lucas S."/>
            <person name="Huang K."/>
            <person name="Goodstein D.M."/>
            <person name="Hawkins T."/>
            <person name="Plengvidhya V."/>
            <person name="Welker D."/>
            <person name="Hughes J."/>
            <person name="Goh Y."/>
            <person name="Benson A."/>
            <person name="Baldwin K."/>
            <person name="Lee J.-H."/>
            <person name="Diaz-Muniz I."/>
            <person name="Dosti B."/>
            <person name="Smeianov V."/>
            <person name="Wechter W."/>
            <person name="Barabote R."/>
            <person name="Lorca G."/>
            <person name="Altermann E."/>
            <person name="Barrangou R."/>
            <person name="Ganesan B."/>
            <person name="Xie Y."/>
            <person name="Rawsthorne H."/>
            <person name="Tamir D."/>
            <person name="Parker C."/>
            <person name="Breidt F."/>
            <person name="Broadbent J.R."/>
            <person name="Hutkins R."/>
            <person name="O'Sullivan D."/>
            <person name="Steele J."/>
            <person name="Unlu G."/>
            <person name="Saier M.H. Jr."/>
            <person name="Klaenhammer T."/>
            <person name="Richardson P."/>
            <person name="Kozyavkin S."/>
            <person name="Weimer B.C."/>
            <person name="Mills D.A."/>
        </authorList>
    </citation>
    <scope>NUCLEOTIDE SEQUENCE [LARGE SCALE GENOMIC DNA]</scope>
    <source>
        <strain>ATCC BAA-491 / LMD-9</strain>
    </source>
</reference>
<keyword id="KW-0030">Aminoacyl-tRNA synthetase</keyword>
<keyword id="KW-0067">ATP-binding</keyword>
<keyword id="KW-0963">Cytoplasm</keyword>
<keyword id="KW-0436">Ligase</keyword>
<keyword id="KW-0547">Nucleotide-binding</keyword>
<keyword id="KW-0648">Protein biosynthesis</keyword>
<protein>
    <recommendedName>
        <fullName evidence="1">Serine--tRNA ligase</fullName>
        <ecNumber evidence="1">6.1.1.11</ecNumber>
    </recommendedName>
    <alternativeName>
        <fullName evidence="1">Seryl-tRNA synthetase</fullName>
        <shortName evidence="1">SerRS</shortName>
    </alternativeName>
    <alternativeName>
        <fullName evidence="1">Seryl-tRNA(Ser/Sec) synthetase</fullName>
    </alternativeName>
</protein>
<feature type="chain" id="PRO_1000019844" description="Serine--tRNA ligase">
    <location>
        <begin position="1"/>
        <end position="425"/>
    </location>
</feature>
<feature type="binding site" evidence="1">
    <location>
        <begin position="230"/>
        <end position="232"/>
    </location>
    <ligand>
        <name>L-serine</name>
        <dbReference type="ChEBI" id="CHEBI:33384"/>
    </ligand>
</feature>
<feature type="binding site" evidence="1">
    <location>
        <begin position="261"/>
        <end position="263"/>
    </location>
    <ligand>
        <name>ATP</name>
        <dbReference type="ChEBI" id="CHEBI:30616"/>
    </ligand>
</feature>
<feature type="binding site" evidence="1">
    <location>
        <position position="284"/>
    </location>
    <ligand>
        <name>L-serine</name>
        <dbReference type="ChEBI" id="CHEBI:33384"/>
    </ligand>
</feature>
<feature type="binding site" evidence="1">
    <location>
        <begin position="348"/>
        <end position="351"/>
    </location>
    <ligand>
        <name>ATP</name>
        <dbReference type="ChEBI" id="CHEBI:30616"/>
    </ligand>
</feature>
<feature type="binding site" evidence="1">
    <location>
        <position position="384"/>
    </location>
    <ligand>
        <name>L-serine</name>
        <dbReference type="ChEBI" id="CHEBI:33384"/>
    </ligand>
</feature>
<comment type="function">
    <text evidence="1">Catalyzes the attachment of serine to tRNA(Ser). Is also able to aminoacylate tRNA(Sec) with serine, to form the misacylated tRNA L-seryl-tRNA(Sec), which will be further converted into selenocysteinyl-tRNA(Sec).</text>
</comment>
<comment type="catalytic activity">
    <reaction evidence="1">
        <text>tRNA(Ser) + L-serine + ATP = L-seryl-tRNA(Ser) + AMP + diphosphate + H(+)</text>
        <dbReference type="Rhea" id="RHEA:12292"/>
        <dbReference type="Rhea" id="RHEA-COMP:9669"/>
        <dbReference type="Rhea" id="RHEA-COMP:9703"/>
        <dbReference type="ChEBI" id="CHEBI:15378"/>
        <dbReference type="ChEBI" id="CHEBI:30616"/>
        <dbReference type="ChEBI" id="CHEBI:33019"/>
        <dbReference type="ChEBI" id="CHEBI:33384"/>
        <dbReference type="ChEBI" id="CHEBI:78442"/>
        <dbReference type="ChEBI" id="CHEBI:78533"/>
        <dbReference type="ChEBI" id="CHEBI:456215"/>
        <dbReference type="EC" id="6.1.1.11"/>
    </reaction>
</comment>
<comment type="catalytic activity">
    <reaction evidence="1">
        <text>tRNA(Sec) + L-serine + ATP = L-seryl-tRNA(Sec) + AMP + diphosphate + H(+)</text>
        <dbReference type="Rhea" id="RHEA:42580"/>
        <dbReference type="Rhea" id="RHEA-COMP:9742"/>
        <dbReference type="Rhea" id="RHEA-COMP:10128"/>
        <dbReference type="ChEBI" id="CHEBI:15378"/>
        <dbReference type="ChEBI" id="CHEBI:30616"/>
        <dbReference type="ChEBI" id="CHEBI:33019"/>
        <dbReference type="ChEBI" id="CHEBI:33384"/>
        <dbReference type="ChEBI" id="CHEBI:78442"/>
        <dbReference type="ChEBI" id="CHEBI:78533"/>
        <dbReference type="ChEBI" id="CHEBI:456215"/>
        <dbReference type="EC" id="6.1.1.11"/>
    </reaction>
</comment>
<comment type="pathway">
    <text evidence="1">Aminoacyl-tRNA biosynthesis; selenocysteinyl-tRNA(Sec) biosynthesis; L-seryl-tRNA(Sec) from L-serine and tRNA(Sec): step 1/1.</text>
</comment>
<comment type="subunit">
    <text evidence="1">Homodimer. The tRNA molecule binds across the dimer.</text>
</comment>
<comment type="subcellular location">
    <subcellularLocation>
        <location evidence="1">Cytoplasm</location>
    </subcellularLocation>
</comment>
<comment type="domain">
    <text evidence="1">Consists of two distinct domains, a catalytic core and a N-terminal extension that is involved in tRNA binding.</text>
</comment>
<comment type="similarity">
    <text evidence="1">Belongs to the class-II aminoacyl-tRNA synthetase family. Type-1 seryl-tRNA synthetase subfamily.</text>
</comment>
<dbReference type="EC" id="6.1.1.11" evidence="1"/>
<dbReference type="EMBL" id="CP000419">
    <property type="protein sequence ID" value="ABJ65669.1"/>
    <property type="molecule type" value="Genomic_DNA"/>
</dbReference>
<dbReference type="RefSeq" id="WP_011680748.1">
    <property type="nucleotide sequence ID" value="NC_008532.1"/>
</dbReference>
<dbReference type="SMR" id="Q03MA3"/>
<dbReference type="KEGG" id="ste:STER_0368"/>
<dbReference type="HOGENOM" id="CLU_023797_1_1_9"/>
<dbReference type="UniPathway" id="UPA00906">
    <property type="reaction ID" value="UER00895"/>
</dbReference>
<dbReference type="GO" id="GO:0005737">
    <property type="term" value="C:cytoplasm"/>
    <property type="evidence" value="ECO:0007669"/>
    <property type="project" value="UniProtKB-SubCell"/>
</dbReference>
<dbReference type="GO" id="GO:0005524">
    <property type="term" value="F:ATP binding"/>
    <property type="evidence" value="ECO:0007669"/>
    <property type="project" value="UniProtKB-UniRule"/>
</dbReference>
<dbReference type="GO" id="GO:0140096">
    <property type="term" value="F:catalytic activity, acting on a protein"/>
    <property type="evidence" value="ECO:0007669"/>
    <property type="project" value="UniProtKB-ARBA"/>
</dbReference>
<dbReference type="GO" id="GO:0004828">
    <property type="term" value="F:serine-tRNA ligase activity"/>
    <property type="evidence" value="ECO:0007669"/>
    <property type="project" value="UniProtKB-UniRule"/>
</dbReference>
<dbReference type="GO" id="GO:0016740">
    <property type="term" value="F:transferase activity"/>
    <property type="evidence" value="ECO:0007669"/>
    <property type="project" value="UniProtKB-ARBA"/>
</dbReference>
<dbReference type="GO" id="GO:0016260">
    <property type="term" value="P:selenocysteine biosynthetic process"/>
    <property type="evidence" value="ECO:0007669"/>
    <property type="project" value="UniProtKB-UniRule"/>
</dbReference>
<dbReference type="GO" id="GO:0006434">
    <property type="term" value="P:seryl-tRNA aminoacylation"/>
    <property type="evidence" value="ECO:0007669"/>
    <property type="project" value="UniProtKB-UniRule"/>
</dbReference>
<dbReference type="CDD" id="cd00770">
    <property type="entry name" value="SerRS_core"/>
    <property type="match status" value="1"/>
</dbReference>
<dbReference type="Gene3D" id="3.30.930.10">
    <property type="entry name" value="Bira Bifunctional Protein, Domain 2"/>
    <property type="match status" value="1"/>
</dbReference>
<dbReference type="Gene3D" id="1.10.287.40">
    <property type="entry name" value="Serine-tRNA synthetase, tRNA binding domain"/>
    <property type="match status" value="1"/>
</dbReference>
<dbReference type="HAMAP" id="MF_00176">
    <property type="entry name" value="Ser_tRNA_synth_type1"/>
    <property type="match status" value="1"/>
</dbReference>
<dbReference type="InterPro" id="IPR002314">
    <property type="entry name" value="aa-tRNA-synt_IIb"/>
</dbReference>
<dbReference type="InterPro" id="IPR006195">
    <property type="entry name" value="aa-tRNA-synth_II"/>
</dbReference>
<dbReference type="InterPro" id="IPR045864">
    <property type="entry name" value="aa-tRNA-synth_II/BPL/LPL"/>
</dbReference>
<dbReference type="InterPro" id="IPR002317">
    <property type="entry name" value="Ser-tRNA-ligase_type_1"/>
</dbReference>
<dbReference type="InterPro" id="IPR015866">
    <property type="entry name" value="Ser-tRNA-synth_1_N"/>
</dbReference>
<dbReference type="InterPro" id="IPR042103">
    <property type="entry name" value="SerRS_1_N_sf"/>
</dbReference>
<dbReference type="InterPro" id="IPR033729">
    <property type="entry name" value="SerRS_core"/>
</dbReference>
<dbReference type="InterPro" id="IPR010978">
    <property type="entry name" value="tRNA-bd_arm"/>
</dbReference>
<dbReference type="NCBIfam" id="TIGR00414">
    <property type="entry name" value="serS"/>
    <property type="match status" value="1"/>
</dbReference>
<dbReference type="PANTHER" id="PTHR43697:SF1">
    <property type="entry name" value="SERINE--TRNA LIGASE"/>
    <property type="match status" value="1"/>
</dbReference>
<dbReference type="PANTHER" id="PTHR43697">
    <property type="entry name" value="SERYL-TRNA SYNTHETASE"/>
    <property type="match status" value="1"/>
</dbReference>
<dbReference type="Pfam" id="PF02403">
    <property type="entry name" value="Seryl_tRNA_N"/>
    <property type="match status" value="1"/>
</dbReference>
<dbReference type="Pfam" id="PF00587">
    <property type="entry name" value="tRNA-synt_2b"/>
    <property type="match status" value="1"/>
</dbReference>
<dbReference type="PIRSF" id="PIRSF001529">
    <property type="entry name" value="Ser-tRNA-synth_IIa"/>
    <property type="match status" value="1"/>
</dbReference>
<dbReference type="PRINTS" id="PR00981">
    <property type="entry name" value="TRNASYNTHSER"/>
</dbReference>
<dbReference type="SUPFAM" id="SSF55681">
    <property type="entry name" value="Class II aaRS and biotin synthetases"/>
    <property type="match status" value="1"/>
</dbReference>
<dbReference type="SUPFAM" id="SSF46589">
    <property type="entry name" value="tRNA-binding arm"/>
    <property type="match status" value="1"/>
</dbReference>
<dbReference type="PROSITE" id="PS50862">
    <property type="entry name" value="AA_TRNA_LIGASE_II"/>
    <property type="match status" value="1"/>
</dbReference>